<comment type="function">
    <text evidence="1">May function to promote vesicle trafficking and/or fusion. May also regulate apoptosis (By similarity).</text>
</comment>
<comment type="subcellular location">
    <subcellularLocation>
        <location evidence="1">Cytoplasm</location>
    </subcellularLocation>
    <subcellularLocation>
        <location evidence="1">Cell membrane</location>
        <topology evidence="1">Peripheral membrane protein</topology>
    </subcellularLocation>
</comment>
<comment type="alternative products">
    <event type="alternative splicing"/>
    <isoform>
        <id>Q7ZYX1-1</id>
        <name>1</name>
        <sequence type="displayed"/>
    </isoform>
    <isoform>
        <id>Q7ZYX1-2</id>
        <name>2</name>
        <sequence type="described" ref="VSP_037632 VSP_037633"/>
    </isoform>
</comment>
<comment type="similarity">
    <text evidence="2">Belongs to the ubiquitin-conjugating enzyme family. FTS subfamily.</text>
</comment>
<comment type="caution">
    <text evidence="5">Lacks the conserved Cys residue necessary for ubiquitin-conjugating enzyme E2 activity.</text>
</comment>
<reference key="1">
    <citation type="submission" date="2003-12" db="EMBL/GenBank/DDBJ databases">
        <authorList>
            <consortium name="NIH - Zebrafish Gene Collection (ZGC) project"/>
        </authorList>
    </citation>
    <scope>NUCLEOTIDE SEQUENCE [LARGE SCALE MRNA] (ISOFORMS 1 AND 2)</scope>
    <source>
        <strain>AB</strain>
    </source>
</reference>
<evidence type="ECO:0000250" key="1"/>
<evidence type="ECO:0000255" key="2">
    <source>
        <dbReference type="PROSITE-ProRule" id="PRU00388"/>
    </source>
</evidence>
<evidence type="ECO:0000256" key="3">
    <source>
        <dbReference type="SAM" id="MobiDB-lite"/>
    </source>
</evidence>
<evidence type="ECO:0000303" key="4">
    <source ref="1"/>
</evidence>
<evidence type="ECO:0000305" key="5"/>
<organism>
    <name type="scientific">Danio rerio</name>
    <name type="common">Zebrafish</name>
    <name type="synonym">Brachydanio rerio</name>
    <dbReference type="NCBI Taxonomy" id="7955"/>
    <lineage>
        <taxon>Eukaryota</taxon>
        <taxon>Metazoa</taxon>
        <taxon>Chordata</taxon>
        <taxon>Craniata</taxon>
        <taxon>Vertebrata</taxon>
        <taxon>Euteleostomi</taxon>
        <taxon>Actinopterygii</taxon>
        <taxon>Neopterygii</taxon>
        <taxon>Teleostei</taxon>
        <taxon>Ostariophysi</taxon>
        <taxon>Cypriniformes</taxon>
        <taxon>Danionidae</taxon>
        <taxon>Danioninae</taxon>
        <taxon>Danio</taxon>
    </lineage>
</organism>
<dbReference type="EMBL" id="BC044455">
    <property type="protein sequence ID" value="AAH44455.1"/>
    <property type="molecule type" value="mRNA"/>
</dbReference>
<dbReference type="EMBL" id="BC063971">
    <property type="protein sequence ID" value="AAH63971.1"/>
    <property type="molecule type" value="mRNA"/>
</dbReference>
<dbReference type="RefSeq" id="NP_001307253.1">
    <molecule id="Q7ZYX1-1"/>
    <property type="nucleotide sequence ID" value="NM_001320324.1"/>
</dbReference>
<dbReference type="RefSeq" id="NP_001307255.1">
    <molecule id="Q7ZYX1-1"/>
    <property type="nucleotide sequence ID" value="NM_001320326.1"/>
</dbReference>
<dbReference type="RefSeq" id="XP_005169026.1">
    <molecule id="Q7ZYX1-2"/>
    <property type="nucleotide sequence ID" value="XM_005168969.5"/>
</dbReference>
<dbReference type="RefSeq" id="XP_068078291.1">
    <molecule id="Q7ZYX1-2"/>
    <property type="nucleotide sequence ID" value="XM_068222190.1"/>
</dbReference>
<dbReference type="SMR" id="Q7ZYX1"/>
<dbReference type="FunCoup" id="Q7ZYX1">
    <property type="interactions" value="423"/>
</dbReference>
<dbReference type="STRING" id="7955.ENSDARP00000122322"/>
<dbReference type="PaxDb" id="7955-ENSDARP00000122322"/>
<dbReference type="Ensembl" id="ENSDART00000146202">
    <molecule id="Q7ZYX1-1"/>
    <property type="protein sequence ID" value="ENSDARP00000122322"/>
    <property type="gene ID" value="ENSDARG00000026862"/>
</dbReference>
<dbReference type="Ensembl" id="ENSDART00000188703">
    <molecule id="Q7ZYX1-1"/>
    <property type="protein sequence ID" value="ENSDARP00000145750"/>
    <property type="gene ID" value="ENSDARG00000026862"/>
</dbReference>
<dbReference type="Ensembl" id="ENSDART00000193792">
    <molecule id="Q7ZYX1-1"/>
    <property type="protein sequence ID" value="ENSDARP00000153827"/>
    <property type="gene ID" value="ENSDARG00000115058"/>
</dbReference>
<dbReference type="GeneID" id="378716"/>
<dbReference type="KEGG" id="dre:378716"/>
<dbReference type="AGR" id="ZFIN:ZDB-GENE-030909-5"/>
<dbReference type="CTD" id="64400"/>
<dbReference type="ZFIN" id="ZDB-GENE-030909-5">
    <property type="gene designation" value="aktip"/>
</dbReference>
<dbReference type="eggNOG" id="KOG0429">
    <property type="taxonomic scope" value="Eukaryota"/>
</dbReference>
<dbReference type="HOGENOM" id="CLU_083049_0_0_1"/>
<dbReference type="InParanoid" id="Q7ZYX1"/>
<dbReference type="OMA" id="WGFPEWR"/>
<dbReference type="OrthoDB" id="5596422at2759"/>
<dbReference type="PhylomeDB" id="Q7ZYX1"/>
<dbReference type="TreeFam" id="TF314386"/>
<dbReference type="PRO" id="PR:Q7ZYX1"/>
<dbReference type="Proteomes" id="UP000000437">
    <property type="component" value="Alternate scaffold 7"/>
</dbReference>
<dbReference type="Proteomes" id="UP000000437">
    <property type="component" value="Chromosome 7"/>
</dbReference>
<dbReference type="Bgee" id="ENSDARG00000026862">
    <property type="expression patterns" value="Expressed in early embryo and 28 other cell types or tissues"/>
</dbReference>
<dbReference type="ExpressionAtlas" id="Q7ZYX1">
    <property type="expression patterns" value="baseline and differential"/>
</dbReference>
<dbReference type="GO" id="GO:0070695">
    <property type="term" value="C:FHF complex"/>
    <property type="evidence" value="ECO:0000250"/>
    <property type="project" value="UniProtKB"/>
</dbReference>
<dbReference type="GO" id="GO:0005634">
    <property type="term" value="C:nucleus"/>
    <property type="evidence" value="ECO:0000318"/>
    <property type="project" value="GO_Central"/>
</dbReference>
<dbReference type="GO" id="GO:0005886">
    <property type="term" value="C:plasma membrane"/>
    <property type="evidence" value="ECO:0007669"/>
    <property type="project" value="UniProtKB-SubCell"/>
</dbReference>
<dbReference type="GO" id="GO:0061631">
    <property type="term" value="F:ubiquitin conjugating enzyme activity"/>
    <property type="evidence" value="ECO:0000318"/>
    <property type="project" value="GO_Central"/>
</dbReference>
<dbReference type="GO" id="GO:0006915">
    <property type="term" value="P:apoptotic process"/>
    <property type="evidence" value="ECO:0007669"/>
    <property type="project" value="UniProtKB-KW"/>
</dbReference>
<dbReference type="GO" id="GO:0045022">
    <property type="term" value="P:early endosome to late endosome transport"/>
    <property type="evidence" value="ECO:0000250"/>
    <property type="project" value="UniProtKB"/>
</dbReference>
<dbReference type="GO" id="GO:0007032">
    <property type="term" value="P:endosome organization"/>
    <property type="evidence" value="ECO:0000250"/>
    <property type="project" value="UniProtKB"/>
</dbReference>
<dbReference type="GO" id="GO:0008333">
    <property type="term" value="P:endosome to lysosome transport"/>
    <property type="evidence" value="ECO:0000250"/>
    <property type="project" value="UniProtKB"/>
</dbReference>
<dbReference type="GO" id="GO:0007040">
    <property type="term" value="P:lysosome organization"/>
    <property type="evidence" value="ECO:0000250"/>
    <property type="project" value="UniProtKB"/>
</dbReference>
<dbReference type="GO" id="GO:0006301">
    <property type="term" value="P:postreplication repair"/>
    <property type="evidence" value="ECO:0000318"/>
    <property type="project" value="GO_Central"/>
</dbReference>
<dbReference type="GO" id="GO:0070534">
    <property type="term" value="P:protein K63-linked ubiquitination"/>
    <property type="evidence" value="ECO:0000318"/>
    <property type="project" value="GO_Central"/>
</dbReference>
<dbReference type="GO" id="GO:0015031">
    <property type="term" value="P:protein transport"/>
    <property type="evidence" value="ECO:0007669"/>
    <property type="project" value="UniProtKB-KW"/>
</dbReference>
<dbReference type="CDD" id="cd23814">
    <property type="entry name" value="UEV_AKTIP"/>
    <property type="match status" value="1"/>
</dbReference>
<dbReference type="FunFam" id="3.10.110.10:FF:000030">
    <property type="entry name" value="AKT-interacting protein-like isoform X2"/>
    <property type="match status" value="1"/>
</dbReference>
<dbReference type="Gene3D" id="3.10.110.10">
    <property type="entry name" value="Ubiquitin Conjugating Enzyme"/>
    <property type="match status" value="1"/>
</dbReference>
<dbReference type="InterPro" id="IPR050113">
    <property type="entry name" value="Ub_conjugating_enzyme"/>
</dbReference>
<dbReference type="InterPro" id="IPR000608">
    <property type="entry name" value="UBQ-conjugat_E2_core"/>
</dbReference>
<dbReference type="InterPro" id="IPR016135">
    <property type="entry name" value="UBQ-conjugating_enzyme/RWD"/>
</dbReference>
<dbReference type="PANTHER" id="PTHR24067">
    <property type="entry name" value="UBIQUITIN-CONJUGATING ENZYME E2"/>
    <property type="match status" value="1"/>
</dbReference>
<dbReference type="Pfam" id="PF00179">
    <property type="entry name" value="UQ_con"/>
    <property type="match status" value="1"/>
</dbReference>
<dbReference type="SMART" id="SM00212">
    <property type="entry name" value="UBCc"/>
    <property type="match status" value="1"/>
</dbReference>
<dbReference type="SUPFAM" id="SSF54495">
    <property type="entry name" value="UBC-like"/>
    <property type="match status" value="1"/>
</dbReference>
<dbReference type="PROSITE" id="PS50127">
    <property type="entry name" value="UBC_2"/>
    <property type="match status" value="1"/>
</dbReference>
<proteinExistence type="evidence at transcript level"/>
<protein>
    <recommendedName>
        <fullName>AKT-interacting protein</fullName>
    </recommendedName>
    <alternativeName>
        <fullName>Fused toes protein homolog</fullName>
    </alternativeName>
</protein>
<name>AKTIP_DANRE</name>
<feature type="chain" id="PRO_0000379020" description="AKT-interacting protein">
    <location>
        <begin position="1"/>
        <end position="293"/>
    </location>
</feature>
<feature type="domain" description="UBC core" evidence="2">
    <location>
        <begin position="75"/>
        <end position="223"/>
    </location>
</feature>
<feature type="region of interest" description="Disordered" evidence="3">
    <location>
        <begin position="1"/>
        <end position="44"/>
    </location>
</feature>
<feature type="region of interest" description="Disordered" evidence="3">
    <location>
        <begin position="260"/>
        <end position="293"/>
    </location>
</feature>
<feature type="compositionally biased region" description="Polar residues" evidence="3">
    <location>
        <begin position="1"/>
        <end position="11"/>
    </location>
</feature>
<feature type="splice variant" id="VSP_037632" description="In isoform 2." evidence="4">
    <original>RRP</original>
    <variation>VSV</variation>
    <location>
        <begin position="259"/>
        <end position="261"/>
    </location>
</feature>
<feature type="splice variant" id="VSP_037633" description="In isoform 2." evidence="4">
    <location>
        <begin position="262"/>
        <end position="293"/>
    </location>
</feature>
<keyword id="KW-0025">Alternative splicing</keyword>
<keyword id="KW-0053">Apoptosis</keyword>
<keyword id="KW-1003">Cell membrane</keyword>
<keyword id="KW-0963">Cytoplasm</keyword>
<keyword id="KW-0472">Membrane</keyword>
<keyword id="KW-0653">Protein transport</keyword>
<keyword id="KW-1185">Reference proteome</keyword>
<keyword id="KW-0813">Transport</keyword>
<gene>
    <name type="primary">aktip</name>
    <name type="synonym">fts</name>
</gene>
<sequence>MNPFWSMSTNAGRKRSDGEEQSGSGEQRASPARPPFGKKQLPSIPKNAVPITKAASPASSTQSANGTHASYGPFYLEYSLLAEFTLVIKQKLPGIYVQPSYRSALMWFGVIFIRHGLYQDGVFKFTVYIPDNYPDGDCPKVVFDTPVFHPLVDPVSGELDVRRAFTKWRRNHNHIWQVLMYARTIFYKINTMEPLNPEAAVLYDKDIQLFKSKVVDSVKLCNSHLFDQPKIDDPYAISFSPWNPAVHEEAKEKMFAHKRRPEDFNKGLPVSGLSWVKPGSTQPFSKEDNPLQT</sequence>
<accession>Q7ZYX1</accession>
<accession>Q6P3I9</accession>